<feature type="chain" id="PRO_0000330266" description="rRNA-processing protein EFG1">
    <location>
        <begin position="1"/>
        <end position="229"/>
    </location>
</feature>
<feature type="region of interest" description="Disordered" evidence="3">
    <location>
        <begin position="196"/>
        <end position="229"/>
    </location>
</feature>
<feature type="coiled-coil region" evidence="2">
    <location>
        <begin position="24"/>
        <end position="119"/>
    </location>
</feature>
<feature type="compositionally biased region" description="Acidic residues" evidence="3">
    <location>
        <begin position="211"/>
        <end position="229"/>
    </location>
</feature>
<reference key="1">
    <citation type="journal article" date="2004" name="Nature">
        <title>Genome evolution in yeasts.</title>
        <authorList>
            <person name="Dujon B."/>
            <person name="Sherman D."/>
            <person name="Fischer G."/>
            <person name="Durrens P."/>
            <person name="Casaregola S."/>
            <person name="Lafontaine I."/>
            <person name="de Montigny J."/>
            <person name="Marck C."/>
            <person name="Neuveglise C."/>
            <person name="Talla E."/>
            <person name="Goffard N."/>
            <person name="Frangeul L."/>
            <person name="Aigle M."/>
            <person name="Anthouard V."/>
            <person name="Babour A."/>
            <person name="Barbe V."/>
            <person name="Barnay S."/>
            <person name="Blanchin S."/>
            <person name="Beckerich J.-M."/>
            <person name="Beyne E."/>
            <person name="Bleykasten C."/>
            <person name="Boisrame A."/>
            <person name="Boyer J."/>
            <person name="Cattolico L."/>
            <person name="Confanioleri F."/>
            <person name="de Daruvar A."/>
            <person name="Despons L."/>
            <person name="Fabre E."/>
            <person name="Fairhead C."/>
            <person name="Ferry-Dumazet H."/>
            <person name="Groppi A."/>
            <person name="Hantraye F."/>
            <person name="Hennequin C."/>
            <person name="Jauniaux N."/>
            <person name="Joyet P."/>
            <person name="Kachouri R."/>
            <person name="Kerrest A."/>
            <person name="Koszul R."/>
            <person name="Lemaire M."/>
            <person name="Lesur I."/>
            <person name="Ma L."/>
            <person name="Muller H."/>
            <person name="Nicaud J.-M."/>
            <person name="Nikolski M."/>
            <person name="Oztas S."/>
            <person name="Ozier-Kalogeropoulos O."/>
            <person name="Pellenz S."/>
            <person name="Potier S."/>
            <person name="Richard G.-F."/>
            <person name="Straub M.-L."/>
            <person name="Suleau A."/>
            <person name="Swennen D."/>
            <person name="Tekaia F."/>
            <person name="Wesolowski-Louvel M."/>
            <person name="Westhof E."/>
            <person name="Wirth B."/>
            <person name="Zeniou-Meyer M."/>
            <person name="Zivanovic Y."/>
            <person name="Bolotin-Fukuhara M."/>
            <person name="Thierry A."/>
            <person name="Bouchier C."/>
            <person name="Caudron B."/>
            <person name="Scarpelli C."/>
            <person name="Gaillardin C."/>
            <person name="Weissenbach J."/>
            <person name="Wincker P."/>
            <person name="Souciet J.-L."/>
        </authorList>
    </citation>
    <scope>NUCLEOTIDE SEQUENCE [LARGE SCALE GENOMIC DNA]</scope>
    <source>
        <strain>ATCC 2001 / BCRC 20586 / JCM 3761 / NBRC 0622 / NRRL Y-65 / CBS 138</strain>
    </source>
</reference>
<gene>
    <name type="primary">EFG1</name>
    <name type="ordered locus">CAGL0G00484g</name>
</gene>
<dbReference type="EMBL" id="CR380953">
    <property type="protein sequence ID" value="CAG59313.1"/>
    <property type="molecule type" value="Genomic_DNA"/>
</dbReference>
<dbReference type="RefSeq" id="XP_446386.1">
    <property type="nucleotide sequence ID" value="XM_446386.1"/>
</dbReference>
<dbReference type="SMR" id="Q6FTQ8"/>
<dbReference type="FunCoup" id="Q6FTQ8">
    <property type="interactions" value="192"/>
</dbReference>
<dbReference type="STRING" id="284593.Q6FTQ8"/>
<dbReference type="EnsemblFungi" id="CAGL0G00484g-T">
    <property type="protein sequence ID" value="CAGL0G00484g-T-p1"/>
    <property type="gene ID" value="CAGL0G00484g"/>
</dbReference>
<dbReference type="KEGG" id="cgr:2888404"/>
<dbReference type="CGD" id="CAL0130825">
    <property type="gene designation" value="CAGL0G00484g"/>
</dbReference>
<dbReference type="VEuPathDB" id="FungiDB:CAGL0G00484g"/>
<dbReference type="eggNOG" id="KOG4484">
    <property type="taxonomic scope" value="Eukaryota"/>
</dbReference>
<dbReference type="HOGENOM" id="CLU_066912_2_0_1"/>
<dbReference type="InParanoid" id="Q6FTQ8"/>
<dbReference type="Proteomes" id="UP000002428">
    <property type="component" value="Chromosome G"/>
</dbReference>
<dbReference type="GO" id="GO:0005730">
    <property type="term" value="C:nucleolus"/>
    <property type="evidence" value="ECO:0007669"/>
    <property type="project" value="UniProtKB-SubCell"/>
</dbReference>
<dbReference type="GO" id="GO:0030688">
    <property type="term" value="C:preribosome, small subunit precursor"/>
    <property type="evidence" value="ECO:0007669"/>
    <property type="project" value="EnsemblFungi"/>
</dbReference>
<dbReference type="GO" id="GO:0000462">
    <property type="term" value="P:maturation of SSU-rRNA from tricistronic rRNA transcript (SSU-rRNA, 5.8S rRNA, LSU-rRNA)"/>
    <property type="evidence" value="ECO:0007669"/>
    <property type="project" value="EnsemblFungi"/>
</dbReference>
<dbReference type="GO" id="GO:0071027">
    <property type="term" value="P:nuclear RNA surveillance"/>
    <property type="evidence" value="ECO:0007669"/>
    <property type="project" value="EnsemblFungi"/>
</dbReference>
<dbReference type="GO" id="GO:0000321">
    <property type="term" value="P:re-entry into mitotic cell cycle after pheromone arrest"/>
    <property type="evidence" value="ECO:0007669"/>
    <property type="project" value="EnsemblFungi"/>
</dbReference>
<dbReference type="InterPro" id="IPR019310">
    <property type="entry name" value="Efg1"/>
</dbReference>
<dbReference type="InterPro" id="IPR050786">
    <property type="entry name" value="EFG1_rRNA-proc"/>
</dbReference>
<dbReference type="PANTHER" id="PTHR33911">
    <property type="entry name" value="RRNA-PROCESSING PROTEIN EFG1"/>
    <property type="match status" value="1"/>
</dbReference>
<dbReference type="PANTHER" id="PTHR33911:SF1">
    <property type="entry name" value="RRNA-PROCESSING PROTEIN EFG1"/>
    <property type="match status" value="1"/>
</dbReference>
<dbReference type="Pfam" id="PF10153">
    <property type="entry name" value="Efg1"/>
    <property type="match status" value="1"/>
</dbReference>
<accession>Q6FTQ8</accession>
<sequence length="229" mass="26579">MSGVRMQKKNRRALGQSLEMAQFLDSGSNKIKRRIRDLERLLKKKKDILPSNIIVEKERTLEALRLELHNHEVKENIRKNAKKYHMVRFFERKKALRRYKKALKTYKADENEANKEALENAEVDLCYVVNFPKSEKYISIFTEDDTEASAETNLRRKAFRQLVRGKIADKSLPVSLSNILAGKKLSEEAIGVTLDDALSRSNQTDASHQESDEDSDSNENEKEEDDFFE</sequence>
<proteinExistence type="inferred from homology"/>
<evidence type="ECO:0000250" key="1"/>
<evidence type="ECO:0000255" key="2"/>
<evidence type="ECO:0000256" key="3">
    <source>
        <dbReference type="SAM" id="MobiDB-lite"/>
    </source>
</evidence>
<evidence type="ECO:0000305" key="4"/>
<protein>
    <recommendedName>
        <fullName>rRNA-processing protein EFG1</fullName>
    </recommendedName>
</protein>
<keyword id="KW-0175">Coiled coil</keyword>
<keyword id="KW-0539">Nucleus</keyword>
<keyword id="KW-1185">Reference proteome</keyword>
<keyword id="KW-0698">rRNA processing</keyword>
<name>EFG1P_CANGA</name>
<organism>
    <name type="scientific">Candida glabrata (strain ATCC 2001 / BCRC 20586 / JCM 3761 / NBRC 0622 / NRRL Y-65 / CBS 138)</name>
    <name type="common">Yeast</name>
    <name type="synonym">Nakaseomyces glabratus</name>
    <dbReference type="NCBI Taxonomy" id="284593"/>
    <lineage>
        <taxon>Eukaryota</taxon>
        <taxon>Fungi</taxon>
        <taxon>Dikarya</taxon>
        <taxon>Ascomycota</taxon>
        <taxon>Saccharomycotina</taxon>
        <taxon>Saccharomycetes</taxon>
        <taxon>Saccharomycetales</taxon>
        <taxon>Saccharomycetaceae</taxon>
        <taxon>Nakaseomyces</taxon>
    </lineage>
</organism>
<comment type="function">
    <text evidence="1">Involved in rRNA processing.</text>
</comment>
<comment type="subcellular location">
    <subcellularLocation>
        <location evidence="1">Nucleus</location>
        <location evidence="1">Nucleolus</location>
    </subcellularLocation>
</comment>
<comment type="similarity">
    <text evidence="4">Belongs to the EFG1 family.</text>
</comment>